<sequence length="157" mass="17070">MGIINIILTLIEDMILAAIPAVGFAMVFNVPLRALKYCALLGAIGHGSRTVLMISGMNIEWASFCAAILVGCIGIQWSRWWLAHPKVFTVAAIIPMFPGINAYVAMISVVKLTQIGYSEEIFEALVTNFLKASFIVGALSIGLSLPGLWLYRKRPSV</sequence>
<protein>
    <recommendedName>
        <fullName evidence="1">Probable succinate transporter subunit YjjB</fullName>
    </recommendedName>
</protein>
<evidence type="ECO:0000255" key="1">
    <source>
        <dbReference type="HAMAP-Rule" id="MF_01191"/>
    </source>
</evidence>
<name>YJJB_PROMH</name>
<dbReference type="EMBL" id="AM942759">
    <property type="protein sequence ID" value="CAR43036.1"/>
    <property type="molecule type" value="Genomic_DNA"/>
</dbReference>
<dbReference type="RefSeq" id="WP_004248197.1">
    <property type="nucleotide sequence ID" value="NC_010554.1"/>
</dbReference>
<dbReference type="EnsemblBacteria" id="CAR43036">
    <property type="protein sequence ID" value="CAR43036"/>
    <property type="gene ID" value="PMI1443"/>
</dbReference>
<dbReference type="GeneID" id="6801302"/>
<dbReference type="KEGG" id="pmr:PMI1443"/>
<dbReference type="eggNOG" id="COG3610">
    <property type="taxonomic scope" value="Bacteria"/>
</dbReference>
<dbReference type="HOGENOM" id="CLU_117642_1_0_6"/>
<dbReference type="Proteomes" id="UP000008319">
    <property type="component" value="Chromosome"/>
</dbReference>
<dbReference type="GO" id="GO:0005886">
    <property type="term" value="C:plasma membrane"/>
    <property type="evidence" value="ECO:0007669"/>
    <property type="project" value="UniProtKB-SubCell"/>
</dbReference>
<dbReference type="GO" id="GO:0015744">
    <property type="term" value="P:succinate transport"/>
    <property type="evidence" value="ECO:0007669"/>
    <property type="project" value="UniProtKB-UniRule"/>
</dbReference>
<dbReference type="HAMAP" id="MF_01191">
    <property type="entry name" value="YjjB"/>
    <property type="match status" value="1"/>
</dbReference>
<dbReference type="InterPro" id="IPR024528">
    <property type="entry name" value="ThrE_2"/>
</dbReference>
<dbReference type="InterPro" id="IPR050539">
    <property type="entry name" value="ThrE_Dicarb/AminoAcid_Exp"/>
</dbReference>
<dbReference type="InterPro" id="IPR020914">
    <property type="entry name" value="YjjB"/>
</dbReference>
<dbReference type="NCBIfam" id="NF007391">
    <property type="entry name" value="PRK09917.1"/>
    <property type="match status" value="1"/>
</dbReference>
<dbReference type="PANTHER" id="PTHR34390:SF1">
    <property type="entry name" value="SUCCINATE TRANSPORTER SUBUNIT YJJB-RELATED"/>
    <property type="match status" value="1"/>
</dbReference>
<dbReference type="PANTHER" id="PTHR34390">
    <property type="entry name" value="UPF0442 PROTEIN YJJB-RELATED"/>
    <property type="match status" value="1"/>
</dbReference>
<dbReference type="Pfam" id="PF12821">
    <property type="entry name" value="ThrE_2"/>
    <property type="match status" value="1"/>
</dbReference>
<organism>
    <name type="scientific">Proteus mirabilis (strain HI4320)</name>
    <dbReference type="NCBI Taxonomy" id="529507"/>
    <lineage>
        <taxon>Bacteria</taxon>
        <taxon>Pseudomonadati</taxon>
        <taxon>Pseudomonadota</taxon>
        <taxon>Gammaproteobacteria</taxon>
        <taxon>Enterobacterales</taxon>
        <taxon>Morganellaceae</taxon>
        <taxon>Proteus</taxon>
    </lineage>
</organism>
<keyword id="KW-0997">Cell inner membrane</keyword>
<keyword id="KW-1003">Cell membrane</keyword>
<keyword id="KW-0472">Membrane</keyword>
<keyword id="KW-1185">Reference proteome</keyword>
<keyword id="KW-0812">Transmembrane</keyword>
<keyword id="KW-1133">Transmembrane helix</keyword>
<keyword id="KW-0813">Transport</keyword>
<feature type="chain" id="PRO_1000138368" description="Probable succinate transporter subunit YjjB">
    <location>
        <begin position="1"/>
        <end position="157"/>
    </location>
</feature>
<feature type="transmembrane region" description="Helical" evidence="1">
    <location>
        <begin position="6"/>
        <end position="26"/>
    </location>
</feature>
<feature type="transmembrane region" description="Helical" evidence="1">
    <location>
        <begin position="51"/>
        <end position="71"/>
    </location>
</feature>
<feature type="transmembrane region" description="Helical" evidence="1">
    <location>
        <begin position="87"/>
        <end position="107"/>
    </location>
</feature>
<feature type="transmembrane region" description="Helical" evidence="1">
    <location>
        <begin position="129"/>
        <end position="149"/>
    </location>
</feature>
<proteinExistence type="inferred from homology"/>
<comment type="function">
    <text evidence="1">Involved in succinate export with YjjP. Both proteins are required for export.</text>
</comment>
<comment type="subunit">
    <text evidence="1">The transporter is composed of YjjB and YjjP.</text>
</comment>
<comment type="subcellular location">
    <subcellularLocation>
        <location evidence="1">Cell inner membrane</location>
        <topology evidence="1">Multi-pass membrane protein</topology>
    </subcellularLocation>
</comment>
<comment type="similarity">
    <text evidence="1">Belongs to the ThrE exporter (TC 2.A.79) family.</text>
</comment>
<reference key="1">
    <citation type="journal article" date="2008" name="J. Bacteriol.">
        <title>Complete genome sequence of uropathogenic Proteus mirabilis, a master of both adherence and motility.</title>
        <authorList>
            <person name="Pearson M.M."/>
            <person name="Sebaihia M."/>
            <person name="Churcher C."/>
            <person name="Quail M.A."/>
            <person name="Seshasayee A.S."/>
            <person name="Luscombe N.M."/>
            <person name="Abdellah Z."/>
            <person name="Arrosmith C."/>
            <person name="Atkin B."/>
            <person name="Chillingworth T."/>
            <person name="Hauser H."/>
            <person name="Jagels K."/>
            <person name="Moule S."/>
            <person name="Mungall K."/>
            <person name="Norbertczak H."/>
            <person name="Rabbinowitsch E."/>
            <person name="Walker D."/>
            <person name="Whithead S."/>
            <person name="Thomson N.R."/>
            <person name="Rather P.N."/>
            <person name="Parkhill J."/>
            <person name="Mobley H.L.T."/>
        </authorList>
    </citation>
    <scope>NUCLEOTIDE SEQUENCE [LARGE SCALE GENOMIC DNA]</scope>
    <source>
        <strain>HI4320</strain>
    </source>
</reference>
<accession>B4EX78</accession>
<gene>
    <name evidence="1" type="primary">yjjB</name>
    <name type="ordered locus">PMI1443</name>
</gene>